<accession>B8D9I3</accession>
<comment type="function">
    <text evidence="1">Activates ribosomal RNA transcription. Plays a direct role in upstream activation of rRNA promoters.</text>
</comment>
<comment type="subunit">
    <text evidence="1">Homodimer.</text>
</comment>
<comment type="similarity">
    <text evidence="1">Belongs to the transcriptional regulatory Fis family.</text>
</comment>
<protein>
    <recommendedName>
        <fullName evidence="1">DNA-binding protein Fis</fullName>
    </recommendedName>
</protein>
<evidence type="ECO:0000255" key="1">
    <source>
        <dbReference type="HAMAP-Rule" id="MF_00166"/>
    </source>
</evidence>
<reference key="1">
    <citation type="journal article" date="2009" name="Science">
        <title>The dynamics and time scale of ongoing genomic erosion in symbiotic bacteria.</title>
        <authorList>
            <person name="Moran N.A."/>
            <person name="McLaughlin H.J."/>
            <person name="Sorek R."/>
        </authorList>
    </citation>
    <scope>NUCLEOTIDE SEQUENCE [LARGE SCALE GENOMIC DNA]</scope>
    <source>
        <strain>5A</strain>
    </source>
</reference>
<gene>
    <name evidence="1" type="primary">fis</name>
    <name type="ordered locus">BUAP5A_393</name>
</gene>
<organism>
    <name type="scientific">Buchnera aphidicola subsp. Acyrthosiphon pisum (strain 5A)</name>
    <dbReference type="NCBI Taxonomy" id="563178"/>
    <lineage>
        <taxon>Bacteria</taxon>
        <taxon>Pseudomonadati</taxon>
        <taxon>Pseudomonadota</taxon>
        <taxon>Gammaproteobacteria</taxon>
        <taxon>Enterobacterales</taxon>
        <taxon>Erwiniaceae</taxon>
        <taxon>Buchnera</taxon>
    </lineage>
</organism>
<name>FIS_BUCA5</name>
<sequence>MLEKKTNTEFLVLSTTNTQDKNIKQPLCELVKKSLKYYLSNLNGKDVNNLYELALSELEQPLLDMIMQYTRGNQTRAALMLGINRSTLRKKLKKYSMN</sequence>
<keyword id="KW-0010">Activator</keyword>
<keyword id="KW-0238">DNA-binding</keyword>
<keyword id="KW-0804">Transcription</keyword>
<keyword id="KW-0805">Transcription regulation</keyword>
<dbReference type="EMBL" id="CP001161">
    <property type="protein sequence ID" value="ACL30754.1"/>
    <property type="molecule type" value="Genomic_DNA"/>
</dbReference>
<dbReference type="RefSeq" id="WP_009874358.1">
    <property type="nucleotide sequence ID" value="NC_011833.1"/>
</dbReference>
<dbReference type="SMR" id="B8D9I3"/>
<dbReference type="KEGG" id="bap:BUAP5A_393"/>
<dbReference type="HOGENOM" id="CLU_158040_3_0_6"/>
<dbReference type="OrthoDB" id="9802388at2"/>
<dbReference type="Proteomes" id="UP000006904">
    <property type="component" value="Chromosome"/>
</dbReference>
<dbReference type="GO" id="GO:0003700">
    <property type="term" value="F:DNA-binding transcription factor activity"/>
    <property type="evidence" value="ECO:0007669"/>
    <property type="project" value="UniProtKB-UniRule"/>
</dbReference>
<dbReference type="GO" id="GO:0043565">
    <property type="term" value="F:sequence-specific DNA binding"/>
    <property type="evidence" value="ECO:0007669"/>
    <property type="project" value="InterPro"/>
</dbReference>
<dbReference type="FunFam" id="1.10.10.60:FF:000006">
    <property type="entry name" value="DNA-binding protein Fis"/>
    <property type="match status" value="1"/>
</dbReference>
<dbReference type="Gene3D" id="1.10.10.60">
    <property type="entry name" value="Homeodomain-like"/>
    <property type="match status" value="1"/>
</dbReference>
<dbReference type="HAMAP" id="MF_00166">
    <property type="entry name" value="DNA_binding_Fis"/>
    <property type="match status" value="1"/>
</dbReference>
<dbReference type="InterPro" id="IPR005412">
    <property type="entry name" value="Fis_DNA-bd"/>
</dbReference>
<dbReference type="InterPro" id="IPR009057">
    <property type="entry name" value="Homeodomain-like_sf"/>
</dbReference>
<dbReference type="InterPro" id="IPR002197">
    <property type="entry name" value="HTH_Fis"/>
</dbReference>
<dbReference type="InterPro" id="IPR050207">
    <property type="entry name" value="Trans_regulatory_Fis"/>
</dbReference>
<dbReference type="NCBIfam" id="NF001659">
    <property type="entry name" value="PRK00430.1"/>
    <property type="match status" value="1"/>
</dbReference>
<dbReference type="PANTHER" id="PTHR47918">
    <property type="entry name" value="DNA-BINDING PROTEIN FIS"/>
    <property type="match status" value="1"/>
</dbReference>
<dbReference type="PANTHER" id="PTHR47918:SF1">
    <property type="entry name" value="DNA-BINDING PROTEIN FIS"/>
    <property type="match status" value="1"/>
</dbReference>
<dbReference type="Pfam" id="PF02954">
    <property type="entry name" value="HTH_8"/>
    <property type="match status" value="1"/>
</dbReference>
<dbReference type="PIRSF" id="PIRSF002097">
    <property type="entry name" value="DNA-binding_Fis"/>
    <property type="match status" value="1"/>
</dbReference>
<dbReference type="PRINTS" id="PR01591">
    <property type="entry name" value="DNABINDNGFIS"/>
</dbReference>
<dbReference type="PRINTS" id="PR01590">
    <property type="entry name" value="HTHFIS"/>
</dbReference>
<dbReference type="SUPFAM" id="SSF46689">
    <property type="entry name" value="Homeodomain-like"/>
    <property type="match status" value="1"/>
</dbReference>
<proteinExistence type="inferred from homology"/>
<feature type="chain" id="PRO_1000123603" description="DNA-binding protein Fis">
    <location>
        <begin position="1"/>
        <end position="98"/>
    </location>
</feature>
<feature type="DNA-binding region" description="H-T-H motif" evidence="1">
    <location>
        <begin position="74"/>
        <end position="93"/>
    </location>
</feature>